<evidence type="ECO:0000255" key="1">
    <source>
        <dbReference type="HAMAP-Rule" id="MF_01006"/>
    </source>
</evidence>
<organism>
    <name type="scientific">Lacticaseibacillus paracasei (strain ATCC 334 / BCRC 17002 / CCUG 31169 / CIP 107868 / KCTC 3260 / NRRL B-441)</name>
    <name type="common">Lactobacillus paracasei</name>
    <dbReference type="NCBI Taxonomy" id="321967"/>
    <lineage>
        <taxon>Bacteria</taxon>
        <taxon>Bacillati</taxon>
        <taxon>Bacillota</taxon>
        <taxon>Bacilli</taxon>
        <taxon>Lactobacillales</taxon>
        <taxon>Lactobacillaceae</taxon>
        <taxon>Lacticaseibacillus</taxon>
    </lineage>
</organism>
<sequence length="272" mass="30142">MFDIIKAVIIGIVEGLTEFLPISSTGHIDLVNHVIKLSQSQDFINMFEYVIQFGAILAVILLYFNKLNPFSKPTAKARNATWQLWAKVIIAVLPSVVVGLPLNNWMDEHLHTPLVVATTLIIYGVLFIILENYLKNKNAHITTLADITYQTALLIGLFQVLSIVPGTSRSGATILGALLIGTSRYVATEFSFFLAIPTMVGVSILKIGKYLWQGNGFSGEQWAVLMTGSIVSFLVAIVAIKWLLKFVQTHDFKPFGWYRIALGAIVLLVMFI</sequence>
<feature type="chain" id="PRO_0000290716" description="Undecaprenyl-diphosphatase">
    <location>
        <begin position="1"/>
        <end position="272"/>
    </location>
</feature>
<feature type="transmembrane region" description="Helical" evidence="1">
    <location>
        <begin position="2"/>
        <end position="22"/>
    </location>
</feature>
<feature type="transmembrane region" description="Helical" evidence="1">
    <location>
        <begin position="43"/>
        <end position="63"/>
    </location>
</feature>
<feature type="transmembrane region" description="Helical" evidence="1">
    <location>
        <begin position="82"/>
        <end position="102"/>
    </location>
</feature>
<feature type="transmembrane region" description="Helical" evidence="1">
    <location>
        <begin position="110"/>
        <end position="130"/>
    </location>
</feature>
<feature type="transmembrane region" description="Helical" evidence="1">
    <location>
        <begin position="185"/>
        <end position="205"/>
    </location>
</feature>
<feature type="transmembrane region" description="Helical" evidence="1">
    <location>
        <begin position="224"/>
        <end position="244"/>
    </location>
</feature>
<feature type="transmembrane region" description="Helical" evidence="1">
    <location>
        <begin position="252"/>
        <end position="272"/>
    </location>
</feature>
<reference key="1">
    <citation type="journal article" date="2006" name="Proc. Natl. Acad. Sci. U.S.A.">
        <title>Comparative genomics of the lactic acid bacteria.</title>
        <authorList>
            <person name="Makarova K.S."/>
            <person name="Slesarev A."/>
            <person name="Wolf Y.I."/>
            <person name="Sorokin A."/>
            <person name="Mirkin B."/>
            <person name="Koonin E.V."/>
            <person name="Pavlov A."/>
            <person name="Pavlova N."/>
            <person name="Karamychev V."/>
            <person name="Polouchine N."/>
            <person name="Shakhova V."/>
            <person name="Grigoriev I."/>
            <person name="Lou Y."/>
            <person name="Rohksar D."/>
            <person name="Lucas S."/>
            <person name="Huang K."/>
            <person name="Goodstein D.M."/>
            <person name="Hawkins T."/>
            <person name="Plengvidhya V."/>
            <person name="Welker D."/>
            <person name="Hughes J."/>
            <person name="Goh Y."/>
            <person name="Benson A."/>
            <person name="Baldwin K."/>
            <person name="Lee J.-H."/>
            <person name="Diaz-Muniz I."/>
            <person name="Dosti B."/>
            <person name="Smeianov V."/>
            <person name="Wechter W."/>
            <person name="Barabote R."/>
            <person name="Lorca G."/>
            <person name="Altermann E."/>
            <person name="Barrangou R."/>
            <person name="Ganesan B."/>
            <person name="Xie Y."/>
            <person name="Rawsthorne H."/>
            <person name="Tamir D."/>
            <person name="Parker C."/>
            <person name="Breidt F."/>
            <person name="Broadbent J.R."/>
            <person name="Hutkins R."/>
            <person name="O'Sullivan D."/>
            <person name="Steele J."/>
            <person name="Unlu G."/>
            <person name="Saier M.H. Jr."/>
            <person name="Klaenhammer T."/>
            <person name="Richardson P."/>
            <person name="Kozyavkin S."/>
            <person name="Weimer B.C."/>
            <person name="Mills D.A."/>
        </authorList>
    </citation>
    <scope>NUCLEOTIDE SEQUENCE [LARGE SCALE GENOMIC DNA]</scope>
    <source>
        <strain>ATCC 334 / BCRC 17002 / CCUG 31169 / CIP 107868 / KCTC 3260 / NRRL B-441</strain>
    </source>
</reference>
<proteinExistence type="inferred from homology"/>
<keyword id="KW-0046">Antibiotic resistance</keyword>
<keyword id="KW-1003">Cell membrane</keyword>
<keyword id="KW-0133">Cell shape</keyword>
<keyword id="KW-0961">Cell wall biogenesis/degradation</keyword>
<keyword id="KW-0378">Hydrolase</keyword>
<keyword id="KW-0472">Membrane</keyword>
<keyword id="KW-0573">Peptidoglycan synthesis</keyword>
<keyword id="KW-1185">Reference proteome</keyword>
<keyword id="KW-0812">Transmembrane</keyword>
<keyword id="KW-1133">Transmembrane helix</keyword>
<accession>Q03AR6</accession>
<protein>
    <recommendedName>
        <fullName evidence="1">Undecaprenyl-diphosphatase</fullName>
        <ecNumber evidence="1">3.6.1.27</ecNumber>
    </recommendedName>
    <alternativeName>
        <fullName evidence="1">Bacitracin resistance protein</fullName>
    </alternativeName>
    <alternativeName>
        <fullName evidence="1">Undecaprenyl pyrophosphate phosphatase</fullName>
    </alternativeName>
</protein>
<comment type="function">
    <text evidence="1">Catalyzes the dephosphorylation of undecaprenyl diphosphate (UPP). Confers resistance to bacitracin.</text>
</comment>
<comment type="catalytic activity">
    <reaction evidence="1">
        <text>di-trans,octa-cis-undecaprenyl diphosphate + H2O = di-trans,octa-cis-undecaprenyl phosphate + phosphate + H(+)</text>
        <dbReference type="Rhea" id="RHEA:28094"/>
        <dbReference type="ChEBI" id="CHEBI:15377"/>
        <dbReference type="ChEBI" id="CHEBI:15378"/>
        <dbReference type="ChEBI" id="CHEBI:43474"/>
        <dbReference type="ChEBI" id="CHEBI:58405"/>
        <dbReference type="ChEBI" id="CHEBI:60392"/>
        <dbReference type="EC" id="3.6.1.27"/>
    </reaction>
</comment>
<comment type="subcellular location">
    <subcellularLocation>
        <location evidence="1">Cell membrane</location>
        <topology evidence="1">Multi-pass membrane protein</topology>
    </subcellularLocation>
</comment>
<comment type="miscellaneous">
    <text>Bacitracin is thought to be involved in the inhibition of peptidoglycan synthesis by sequestering undecaprenyl diphosphate, thereby reducing the pool of lipid carrier available.</text>
</comment>
<comment type="similarity">
    <text evidence="1">Belongs to the UppP family.</text>
</comment>
<name>UPPP_LACP3</name>
<dbReference type="EC" id="3.6.1.27" evidence="1"/>
<dbReference type="EMBL" id="CP000423">
    <property type="protein sequence ID" value="ABJ69706.1"/>
    <property type="molecule type" value="Genomic_DNA"/>
</dbReference>
<dbReference type="RefSeq" id="WP_003564150.1">
    <property type="nucleotide sequence ID" value="NC_008526.1"/>
</dbReference>
<dbReference type="RefSeq" id="YP_806148.1">
    <property type="nucleotide sequence ID" value="NC_008526.1"/>
</dbReference>
<dbReference type="SMR" id="Q03AR6"/>
<dbReference type="STRING" id="321967.LSEI_0906"/>
<dbReference type="PaxDb" id="321967-LSEI_0906"/>
<dbReference type="KEGG" id="lca:LSEI_0906"/>
<dbReference type="PATRIC" id="fig|321967.11.peg.875"/>
<dbReference type="HOGENOM" id="CLU_060296_2_0_9"/>
<dbReference type="Proteomes" id="UP000001651">
    <property type="component" value="Chromosome"/>
</dbReference>
<dbReference type="GO" id="GO:0005886">
    <property type="term" value="C:plasma membrane"/>
    <property type="evidence" value="ECO:0007669"/>
    <property type="project" value="UniProtKB-SubCell"/>
</dbReference>
<dbReference type="GO" id="GO:0050380">
    <property type="term" value="F:undecaprenyl-diphosphatase activity"/>
    <property type="evidence" value="ECO:0007669"/>
    <property type="project" value="UniProtKB-UniRule"/>
</dbReference>
<dbReference type="GO" id="GO:0071555">
    <property type="term" value="P:cell wall organization"/>
    <property type="evidence" value="ECO:0007669"/>
    <property type="project" value="UniProtKB-KW"/>
</dbReference>
<dbReference type="GO" id="GO:0009252">
    <property type="term" value="P:peptidoglycan biosynthetic process"/>
    <property type="evidence" value="ECO:0007669"/>
    <property type="project" value="UniProtKB-KW"/>
</dbReference>
<dbReference type="GO" id="GO:0008360">
    <property type="term" value="P:regulation of cell shape"/>
    <property type="evidence" value="ECO:0007669"/>
    <property type="project" value="UniProtKB-KW"/>
</dbReference>
<dbReference type="GO" id="GO:0046677">
    <property type="term" value="P:response to antibiotic"/>
    <property type="evidence" value="ECO:0007669"/>
    <property type="project" value="UniProtKB-UniRule"/>
</dbReference>
<dbReference type="HAMAP" id="MF_01006">
    <property type="entry name" value="Undec_diphosphatase"/>
    <property type="match status" value="1"/>
</dbReference>
<dbReference type="InterPro" id="IPR003824">
    <property type="entry name" value="UppP"/>
</dbReference>
<dbReference type="NCBIfam" id="NF001389">
    <property type="entry name" value="PRK00281.1-2"/>
    <property type="match status" value="1"/>
</dbReference>
<dbReference type="NCBIfam" id="NF001390">
    <property type="entry name" value="PRK00281.1-4"/>
    <property type="match status" value="1"/>
</dbReference>
<dbReference type="NCBIfam" id="NF001391">
    <property type="entry name" value="PRK00281.1-5"/>
    <property type="match status" value="1"/>
</dbReference>
<dbReference type="NCBIfam" id="TIGR00753">
    <property type="entry name" value="undec_PP_bacA"/>
    <property type="match status" value="1"/>
</dbReference>
<dbReference type="PANTHER" id="PTHR30622">
    <property type="entry name" value="UNDECAPRENYL-DIPHOSPHATASE"/>
    <property type="match status" value="1"/>
</dbReference>
<dbReference type="PANTHER" id="PTHR30622:SF3">
    <property type="entry name" value="UNDECAPRENYL-DIPHOSPHATASE"/>
    <property type="match status" value="1"/>
</dbReference>
<dbReference type="Pfam" id="PF02673">
    <property type="entry name" value="BacA"/>
    <property type="match status" value="1"/>
</dbReference>
<gene>
    <name evidence="1" type="primary">uppP</name>
    <name type="ordered locus">LSEI_0906</name>
</gene>